<evidence type="ECO:0000250" key="1">
    <source>
        <dbReference type="UniProtKB" id="Q4X1W0"/>
    </source>
</evidence>
<evidence type="ECO:0000269" key="2">
    <source>
    </source>
</evidence>
<evidence type="ECO:0000269" key="3">
    <source>
    </source>
</evidence>
<evidence type="ECO:0000269" key="4">
    <source>
    </source>
</evidence>
<evidence type="ECO:0000269" key="5">
    <source>
    </source>
</evidence>
<evidence type="ECO:0000303" key="6">
    <source ref="2"/>
</evidence>
<evidence type="ECO:0000305" key="7"/>
<comment type="function">
    <text evidence="1 4">Acyl-carrier-protein synthase that transfers the 4'-phosphopantetheine moiety from coenzyme A to a Ser of an acyl-carrier-protein. The 4'-phosphopantetheine (4'-PPT) portion of CoA provides the essential prosthetic group for a number of carrier proteins and multi-domain enzymes, priming them for the acceptance of acyl building blocks in fatty acid synthesis and many aspects of secondary metabolism mediated by polyketide synthases (PKSs) and non-ribosomal peptide synthetases (NRPSs) (By similarity). Plays a key role in liamocins biosynthesis by activationg the HR-PKS PKS1 that produces 3,5-dihydroxydecanoic acid, a precursor of liamocins (PubMed:32003433).</text>
</comment>
<comment type="catalytic activity">
    <reaction evidence="1">
        <text>apo-[ACP] + CoA = holo-[ACP] + adenosine 3',5'-bisphosphate + H(+)</text>
        <dbReference type="Rhea" id="RHEA:12068"/>
        <dbReference type="Rhea" id="RHEA-COMP:9685"/>
        <dbReference type="Rhea" id="RHEA-COMP:9690"/>
        <dbReference type="ChEBI" id="CHEBI:15378"/>
        <dbReference type="ChEBI" id="CHEBI:29999"/>
        <dbReference type="ChEBI" id="CHEBI:57287"/>
        <dbReference type="ChEBI" id="CHEBI:58343"/>
        <dbReference type="ChEBI" id="CHEBI:64479"/>
        <dbReference type="EC" id="2.7.8.7"/>
    </reaction>
</comment>
<comment type="induction">
    <text evidence="5">Expression is regulated by the cAMP-PKA and HOG1 signaling pathways via the transcriptional activator MSN2.</text>
</comment>
<comment type="disruption phenotype">
    <text evidence="4">Completely abolishes the ability to produce any liamocins.</text>
</comment>
<comment type="biotechnology">
    <text evidence="2 3">Liamocins have high bioactivity against the pathogenic bacteria Streptococcus spp. and can be potential new specific inhibitors of oral streptococcal biofilms without affecting normal oral microflora (PubMed:30627519). Liamocins are also able to inhibit human cancer cell lines such as breast cancer cell lines T47D and SK-BR3 or the cervical cancer cell line HeLa (PubMed:21293903).</text>
</comment>
<comment type="similarity">
    <text evidence="7">Belongs to the P-Pant transferase superfamily.</text>
</comment>
<reference key="1">
    <citation type="submission" date="2016-11" db="EMBL/GenBank/DDBJ databases">
        <title>Diversity of Aureobasidium pullulans from marine environment.</title>
        <authorList>
            <person name="Wang Y.K."/>
        </authorList>
    </citation>
    <scope>NUCLEOTIDE SEQUENCE [GENOMIC DNA]</scope>
    <source>
        <strain>P5</strain>
    </source>
</reference>
<reference key="2">
    <citation type="submission" date="2017-07" db="EMBL/GenBank/DDBJ databases">
        <authorList>
            <person name="Sun Z.S."/>
            <person name="Albrecht U."/>
            <person name="Echele G."/>
            <person name="Lee C.C."/>
        </authorList>
    </citation>
    <scope>NUCLEOTIDE SEQUENCE [GENOMIC DNA]</scope>
    <source>
        <strain>6-1-2</strain>
    </source>
</reference>
<reference key="3">
    <citation type="journal article" date="2011" name="Biotechnol. Lett.">
        <title>Heavy oils produced by Aureobasidium pullulans.</title>
        <authorList>
            <person name="Manitchotpisit P."/>
            <person name="Price N.P."/>
            <person name="Leathers T.D."/>
            <person name="Punnapayak H."/>
        </authorList>
    </citation>
    <scope>BIOTECHNOLOGY</scope>
</reference>
<reference key="4">
    <citation type="journal article" date="2019" name="Biotechnol. Rep.">
        <title>Inhibition of Streptococcus mutans and S. sobrinus biofilms by liamocins from Aureobasidium pullulans.</title>
        <authorList>
            <person name="Leathers T.D."/>
            <person name="Rich J.O."/>
            <person name="Bischoff K.M."/>
            <person name="Skory C.D."/>
            <person name="Nunnally M.S."/>
        </authorList>
    </citation>
    <scope>BIOTECHNOLOGY</scope>
</reference>
<reference key="5">
    <citation type="journal article" date="2020" name="Biochem. J.">
        <title>Genetic evidences for the core biosynthesis pathway, regulation, transport and secretion of liamocins in yeast-like fungal cells.</title>
        <authorList>
            <person name="Xue S.J."/>
            <person name="Liu G.L."/>
            <person name="Chi Z."/>
            <person name="Gao Z.C."/>
            <person name="Hu Z."/>
            <person name="Chi Z.M."/>
        </authorList>
    </citation>
    <scope>FUNCTION</scope>
    <scope>DISRUPTION PHENOTYPE</scope>
</reference>
<reference key="6">
    <citation type="journal article" date="2021" name="Enzyme Microb. Technol.">
        <title>cAMP-PKA and HOG1 signaling pathways regulate liamocin production by different ways via the transcriptional activator Msn2 in Aureobasidium melanogenum.</title>
        <authorList>
            <person name="Zhang M."/>
            <person name="Gao Z.C."/>
            <person name="Chi Z."/>
            <person name="Liu G.L."/>
            <person name="Hu Z."/>
            <person name="Chi Z.M."/>
        </authorList>
    </citation>
    <scope>INDUCTION</scope>
</reference>
<keyword id="KW-0808">Transferase</keyword>
<protein>
    <recommendedName>
        <fullName evidence="6">4'-phosphopantetheinyl transferase</fullName>
        <shortName evidence="6">PPTase</shortName>
        <ecNumber evidence="1">2.7.8.7</ecNumber>
    </recommendedName>
    <alternativeName>
        <fullName evidence="1">Acyl-carrier-protein synthase</fullName>
    </alternativeName>
    <alternativeName>
        <fullName evidence="1">Phosphopantetheine:protein transferase</fullName>
    </alternativeName>
</protein>
<organism>
    <name type="scientific">Aureobasidium melanogenum</name>
    <name type="common">Aureobasidium pullulans var. melanogenum</name>
    <dbReference type="NCBI Taxonomy" id="46634"/>
    <lineage>
        <taxon>Eukaryota</taxon>
        <taxon>Fungi</taxon>
        <taxon>Dikarya</taxon>
        <taxon>Ascomycota</taxon>
        <taxon>Pezizomycotina</taxon>
        <taxon>Dothideomycetes</taxon>
        <taxon>Dothideomycetidae</taxon>
        <taxon>Dothideales</taxon>
        <taxon>Saccotheciaceae</taxon>
        <taxon>Aureobasidium</taxon>
    </lineage>
</organism>
<name>PPTA_AURME</name>
<dbReference type="EC" id="2.7.8.7" evidence="1"/>
<dbReference type="EMBL" id="KY174985">
    <property type="protein sequence ID" value="AST22499.1"/>
    <property type="molecule type" value="Genomic_DNA"/>
</dbReference>
<dbReference type="EMBL" id="MF576066">
    <property type="protein sequence ID" value="AVI10166.1"/>
    <property type="molecule type" value="Genomic_DNA"/>
</dbReference>
<dbReference type="GO" id="GO:0005829">
    <property type="term" value="C:cytosol"/>
    <property type="evidence" value="ECO:0007669"/>
    <property type="project" value="TreeGrafter"/>
</dbReference>
<dbReference type="GO" id="GO:0008897">
    <property type="term" value="F:holo-[acyl-carrier-protein] synthase activity"/>
    <property type="evidence" value="ECO:0007669"/>
    <property type="project" value="InterPro"/>
</dbReference>
<dbReference type="GO" id="GO:0000287">
    <property type="term" value="F:magnesium ion binding"/>
    <property type="evidence" value="ECO:0007669"/>
    <property type="project" value="InterPro"/>
</dbReference>
<dbReference type="GO" id="GO:0019878">
    <property type="term" value="P:lysine biosynthetic process via aminoadipic acid"/>
    <property type="evidence" value="ECO:0007669"/>
    <property type="project" value="TreeGrafter"/>
</dbReference>
<dbReference type="Gene3D" id="3.90.470.20">
    <property type="entry name" value="4'-phosphopantetheinyl transferase domain"/>
    <property type="match status" value="1"/>
</dbReference>
<dbReference type="InterPro" id="IPR037143">
    <property type="entry name" value="4-PPantetheinyl_Trfase_dom_sf"/>
</dbReference>
<dbReference type="InterPro" id="IPR055066">
    <property type="entry name" value="AASDHPPT_N"/>
</dbReference>
<dbReference type="InterPro" id="IPR050559">
    <property type="entry name" value="P-Pant_transferase_sf"/>
</dbReference>
<dbReference type="PANTHER" id="PTHR12215:SF10">
    <property type="entry name" value="L-AMINOADIPATE-SEMIALDEHYDE DEHYDROGENASE-PHOSPHOPANTETHEINYL TRANSFERASE"/>
    <property type="match status" value="1"/>
</dbReference>
<dbReference type="PANTHER" id="PTHR12215">
    <property type="entry name" value="PHOSPHOPANTETHEINE TRANSFERASE"/>
    <property type="match status" value="1"/>
</dbReference>
<dbReference type="Pfam" id="PF22624">
    <property type="entry name" value="AASDHPPT_N"/>
    <property type="match status" value="1"/>
</dbReference>
<dbReference type="SUPFAM" id="SSF56214">
    <property type="entry name" value="4'-phosphopantetheinyl transferase"/>
    <property type="match status" value="2"/>
</dbReference>
<feature type="chain" id="PRO_0000461626" description="4'-phosphopantetheinyl transferase">
    <location>
        <begin position="1"/>
        <end position="338"/>
    </location>
</feature>
<sequence>MTDSNLLGLTCWLIDTRTLWPGQHIKDAASDILHLLSNDERNAVLRKIFIADARMSLASALLKRLYISRALNIPWRDVKIARKGDPTHGKPCAVLPDGSFAPIDFNVSHQAGLVSLVGWNPPPGQSQSALVGTDIVCVNERDDYRTIDQEGFDAWIDIYEDVFSEAERWDMKYNVDYITLLDGRIIQGNSLGRVDRCVRRNKDLSITLPTGETHSFNSDLLIDAKLRRFYSFFCYKEAYIKLAGEALLAPWLKELEFQNVKSPKPGTVARCSTHGTWGEKVSDVEVVLHGEKVEDVKMTLQAFEENFMLATAVQGLRDLEAPPFTKLNLENDVVAFAS</sequence>
<proteinExistence type="evidence at protein level"/>
<accession>A0A223GB52</accession>